<evidence type="ECO:0000255" key="1">
    <source>
        <dbReference type="PROSITE-ProRule" id="PRU00453"/>
    </source>
</evidence>
<evidence type="ECO:0000256" key="2">
    <source>
        <dbReference type="SAM" id="MobiDB-lite"/>
    </source>
</evidence>
<evidence type="ECO:0000269" key="3">
    <source>
    </source>
</evidence>
<evidence type="ECO:0000269" key="4">
    <source>
    </source>
</evidence>
<evidence type="ECO:0000269" key="5">
    <source>
    </source>
</evidence>
<evidence type="ECO:0000269" key="6">
    <source>
    </source>
</evidence>
<evidence type="ECO:0000305" key="7"/>
<evidence type="ECO:0007744" key="8">
    <source>
    </source>
</evidence>
<evidence type="ECO:0007829" key="9">
    <source>
        <dbReference type="PDB" id="2N94"/>
    </source>
</evidence>
<evidence type="ECO:0007829" key="10">
    <source>
        <dbReference type="PDB" id="6NZ2"/>
    </source>
</evidence>
<evidence type="ECO:0007829" key="11">
    <source>
        <dbReference type="PDB" id="6THL"/>
    </source>
</evidence>
<proteinExistence type="evidence at protein level"/>
<name>BCD1_YEAST</name>
<feature type="chain" id="PRO_0000173558" description="Box C/D snoRNA protein 1">
    <location>
        <begin position="1"/>
        <end position="366"/>
    </location>
</feature>
<feature type="zinc finger region" description="HIT-type" evidence="1">
    <location>
        <begin position="5"/>
        <end position="39"/>
    </location>
</feature>
<feature type="region of interest" description="Disordered" evidence="2">
    <location>
        <begin position="318"/>
        <end position="366"/>
    </location>
</feature>
<feature type="compositionally biased region" description="Acidic residues" evidence="2">
    <location>
        <begin position="321"/>
        <end position="332"/>
    </location>
</feature>
<feature type="compositionally biased region" description="Acidic residues" evidence="2">
    <location>
        <begin position="343"/>
        <end position="355"/>
    </location>
</feature>
<feature type="binding site" evidence="1">
    <location>
        <position position="5"/>
    </location>
    <ligand>
        <name>Zn(2+)</name>
        <dbReference type="ChEBI" id="CHEBI:29105"/>
        <label>1</label>
    </ligand>
</feature>
<feature type="binding site" evidence="1">
    <location>
        <position position="8"/>
    </location>
    <ligand>
        <name>Zn(2+)</name>
        <dbReference type="ChEBI" id="CHEBI:29105"/>
        <label>1</label>
    </ligand>
</feature>
<feature type="binding site" evidence="1">
    <location>
        <position position="17"/>
    </location>
    <ligand>
        <name>Zn(2+)</name>
        <dbReference type="ChEBI" id="CHEBI:29105"/>
        <label>2</label>
    </ligand>
</feature>
<feature type="binding site" evidence="1">
    <location>
        <position position="20"/>
    </location>
    <ligand>
        <name>Zn(2+)</name>
        <dbReference type="ChEBI" id="CHEBI:29105"/>
        <label>2</label>
    </ligand>
</feature>
<feature type="binding site" evidence="1">
    <location>
        <position position="25"/>
    </location>
    <ligand>
        <name>Zn(2+)</name>
        <dbReference type="ChEBI" id="CHEBI:29105"/>
        <label>1</label>
    </ligand>
</feature>
<feature type="binding site" evidence="1">
    <location>
        <position position="29"/>
    </location>
    <ligand>
        <name>Zn(2+)</name>
        <dbReference type="ChEBI" id="CHEBI:29105"/>
        <label>1</label>
    </ligand>
</feature>
<feature type="binding site" evidence="1">
    <location>
        <position position="33"/>
    </location>
    <ligand>
        <name>Zn(2+)</name>
        <dbReference type="ChEBI" id="CHEBI:29105"/>
        <label>2</label>
    </ligand>
</feature>
<feature type="binding site" evidence="1">
    <location>
        <position position="39"/>
    </location>
    <ligand>
        <name>Zn(2+)</name>
        <dbReference type="ChEBI" id="CHEBI:29105"/>
        <label>2</label>
    </ligand>
</feature>
<feature type="modified residue" description="Phosphoserine" evidence="8">
    <location>
        <position position="330"/>
    </location>
</feature>
<feature type="strand" evidence="9">
    <location>
        <begin position="6"/>
        <end position="8"/>
    </location>
</feature>
<feature type="turn" evidence="9">
    <location>
        <begin position="18"/>
        <end position="20"/>
    </location>
</feature>
<feature type="helix" evidence="9">
    <location>
        <begin position="27"/>
        <end position="37"/>
    </location>
</feature>
<feature type="strand" evidence="9">
    <location>
        <begin position="41"/>
        <end position="43"/>
    </location>
</feature>
<feature type="strand" evidence="10">
    <location>
        <begin position="127"/>
        <end position="130"/>
    </location>
</feature>
<feature type="strand" evidence="11">
    <location>
        <begin position="133"/>
        <end position="136"/>
    </location>
</feature>
<feature type="helix" evidence="11">
    <location>
        <begin position="143"/>
        <end position="147"/>
    </location>
</feature>
<feature type="strand" evidence="11">
    <location>
        <begin position="151"/>
        <end position="153"/>
    </location>
</feature>
<feature type="turn" evidence="11">
    <location>
        <begin position="154"/>
        <end position="157"/>
    </location>
</feature>
<feature type="strand" evidence="11">
    <location>
        <begin position="158"/>
        <end position="167"/>
    </location>
</feature>
<feature type="strand" evidence="11">
    <location>
        <begin position="180"/>
        <end position="191"/>
    </location>
</feature>
<feature type="helix" evidence="11">
    <location>
        <begin position="194"/>
        <end position="196"/>
    </location>
</feature>
<feature type="helix" evidence="11">
    <location>
        <begin position="199"/>
        <end position="208"/>
    </location>
</feature>
<feature type="turn" evidence="10">
    <location>
        <begin position="218"/>
        <end position="220"/>
    </location>
</feature>
<feature type="helix" evidence="11">
    <location>
        <begin position="227"/>
        <end position="235"/>
    </location>
</feature>
<feature type="strand" evidence="11">
    <location>
        <begin position="240"/>
        <end position="244"/>
    </location>
</feature>
<feature type="strand" evidence="11">
    <location>
        <begin position="258"/>
        <end position="261"/>
    </location>
</feature>
<feature type="helix" evidence="11">
    <location>
        <begin position="264"/>
        <end position="266"/>
    </location>
</feature>
<feature type="helix" evidence="11">
    <location>
        <begin position="269"/>
        <end position="273"/>
    </location>
</feature>
<feature type="strand" evidence="11">
    <location>
        <begin position="277"/>
        <end position="281"/>
    </location>
</feature>
<feature type="strand" evidence="11">
    <location>
        <begin position="283"/>
        <end position="290"/>
    </location>
</feature>
<organism>
    <name type="scientific">Saccharomyces cerevisiae (strain ATCC 204508 / S288c)</name>
    <name type="common">Baker's yeast</name>
    <dbReference type="NCBI Taxonomy" id="559292"/>
    <lineage>
        <taxon>Eukaryota</taxon>
        <taxon>Fungi</taxon>
        <taxon>Dikarya</taxon>
        <taxon>Ascomycota</taxon>
        <taxon>Saccharomycotina</taxon>
        <taxon>Saccharomycetes</taxon>
        <taxon>Saccharomycetales</taxon>
        <taxon>Saccharomycetaceae</taxon>
        <taxon>Saccharomyces</taxon>
    </lineage>
</organism>
<dbReference type="EMBL" id="U00062">
    <property type="protein sequence ID" value="AAB68905.1"/>
    <property type="molecule type" value="Genomic_DNA"/>
</dbReference>
<dbReference type="EMBL" id="BK006934">
    <property type="protein sequence ID" value="DAA06732.1"/>
    <property type="molecule type" value="Genomic_DNA"/>
</dbReference>
<dbReference type="PIR" id="S46736">
    <property type="entry name" value="S46736"/>
</dbReference>
<dbReference type="RefSeq" id="NP_011906.1">
    <property type="nucleotide sequence ID" value="NM_001179170.1"/>
</dbReference>
<dbReference type="PDB" id="2N94">
    <property type="method" value="NMR"/>
    <property type="chains" value="A=1-45"/>
</dbReference>
<dbReference type="PDB" id="6NZ2">
    <property type="method" value="NMR"/>
    <property type="chains" value="A=120-303"/>
</dbReference>
<dbReference type="PDB" id="6THL">
    <property type="method" value="X-ray"/>
    <property type="resolution" value="2.80 A"/>
    <property type="chains" value="B=120-303"/>
</dbReference>
<dbReference type="PDBsum" id="2N94"/>
<dbReference type="PDBsum" id="6NZ2"/>
<dbReference type="PDBsum" id="6THL"/>
<dbReference type="SMR" id="P38772"/>
<dbReference type="BioGRID" id="36472">
    <property type="interactions" value="212"/>
</dbReference>
<dbReference type="DIP" id="DIP-3862N"/>
<dbReference type="FunCoup" id="P38772">
    <property type="interactions" value="173"/>
</dbReference>
<dbReference type="IntAct" id="P38772">
    <property type="interactions" value="7"/>
</dbReference>
<dbReference type="STRING" id="4932.YHR040W"/>
<dbReference type="iPTMnet" id="P38772"/>
<dbReference type="PaxDb" id="4932-YHR040W"/>
<dbReference type="PeptideAtlas" id="P38772"/>
<dbReference type="EnsemblFungi" id="YHR040W_mRNA">
    <property type="protein sequence ID" value="YHR040W"/>
    <property type="gene ID" value="YHR040W"/>
</dbReference>
<dbReference type="GeneID" id="856436"/>
<dbReference type="KEGG" id="sce:YHR040W"/>
<dbReference type="AGR" id="SGD:S000001082"/>
<dbReference type="SGD" id="S000001082">
    <property type="gene designation" value="BCD1"/>
</dbReference>
<dbReference type="VEuPathDB" id="FungiDB:YHR040W"/>
<dbReference type="eggNOG" id="KOG2858">
    <property type="taxonomic scope" value="Eukaryota"/>
</dbReference>
<dbReference type="GeneTree" id="ENSGT00390000017201"/>
<dbReference type="HOGENOM" id="CLU_025524_3_0_1"/>
<dbReference type="InParanoid" id="P38772"/>
<dbReference type="OMA" id="YWRVEWL"/>
<dbReference type="OrthoDB" id="272357at2759"/>
<dbReference type="BioCyc" id="YEAST:G3O-31099-MONOMER"/>
<dbReference type="BioGRID-ORCS" id="856436">
    <property type="hits" value="4 hits in 10 CRISPR screens"/>
</dbReference>
<dbReference type="EvolutionaryTrace" id="P38772"/>
<dbReference type="PRO" id="PR:P38772"/>
<dbReference type="Proteomes" id="UP000002311">
    <property type="component" value="Chromosome VIII"/>
</dbReference>
<dbReference type="RNAct" id="P38772">
    <property type="molecule type" value="protein"/>
</dbReference>
<dbReference type="GO" id="GO:0005737">
    <property type="term" value="C:cytoplasm"/>
    <property type="evidence" value="ECO:0007005"/>
    <property type="project" value="SGD"/>
</dbReference>
<dbReference type="GO" id="GO:0005634">
    <property type="term" value="C:nucleus"/>
    <property type="evidence" value="ECO:0007005"/>
    <property type="project" value="SGD"/>
</dbReference>
<dbReference type="GO" id="GO:0070761">
    <property type="term" value="C:pre-snoRNP complex"/>
    <property type="evidence" value="ECO:0000318"/>
    <property type="project" value="GO_Central"/>
</dbReference>
<dbReference type="GO" id="GO:0030515">
    <property type="term" value="F:snoRNA binding"/>
    <property type="evidence" value="ECO:0000314"/>
    <property type="project" value="SGD"/>
</dbReference>
<dbReference type="GO" id="GO:0008270">
    <property type="term" value="F:zinc ion binding"/>
    <property type="evidence" value="ECO:0007669"/>
    <property type="project" value="UniProtKB-KW"/>
</dbReference>
<dbReference type="GO" id="GO:0000492">
    <property type="term" value="P:box C/D snoRNP assembly"/>
    <property type="evidence" value="ECO:0000314"/>
    <property type="project" value="SGD"/>
</dbReference>
<dbReference type="GO" id="GO:0000463">
    <property type="term" value="P:maturation of LSU-rRNA from tricistronic rRNA transcript (SSU-rRNA, 5.8S rRNA, LSU-rRNA)"/>
    <property type="evidence" value="ECO:0000318"/>
    <property type="project" value="GO_Central"/>
</dbReference>
<dbReference type="GO" id="GO:0042254">
    <property type="term" value="P:ribosome biogenesis"/>
    <property type="evidence" value="ECO:0000314"/>
    <property type="project" value="SGD"/>
</dbReference>
<dbReference type="GO" id="GO:0016074">
    <property type="term" value="P:sno(s)RNA metabolic process"/>
    <property type="evidence" value="ECO:0000315"/>
    <property type="project" value="SGD"/>
</dbReference>
<dbReference type="GO" id="GO:0048254">
    <property type="term" value="P:snoRNA localization"/>
    <property type="evidence" value="ECO:0000318"/>
    <property type="project" value="GO_Central"/>
</dbReference>
<dbReference type="CDD" id="cd23023">
    <property type="entry name" value="zf-HIT_BCD1"/>
    <property type="match status" value="1"/>
</dbReference>
<dbReference type="FunFam" id="3.30.60.190:FF:000007">
    <property type="entry name" value="Box C/D snoRNA"/>
    <property type="match status" value="1"/>
</dbReference>
<dbReference type="Gene3D" id="3.30.60.190">
    <property type="match status" value="1"/>
</dbReference>
<dbReference type="InterPro" id="IPR051639">
    <property type="entry name" value="BCD1"/>
</dbReference>
<dbReference type="InterPro" id="IPR007529">
    <property type="entry name" value="Znf_HIT"/>
</dbReference>
<dbReference type="PANTHER" id="PTHR13483:SF3">
    <property type="entry name" value="BOX C_D SNORNA PROTEIN 1"/>
    <property type="match status" value="1"/>
</dbReference>
<dbReference type="PANTHER" id="PTHR13483">
    <property type="entry name" value="BOX C_D SNORNA PROTEIN 1-RELATED"/>
    <property type="match status" value="1"/>
</dbReference>
<dbReference type="Pfam" id="PF04438">
    <property type="entry name" value="zf-HIT"/>
    <property type="match status" value="1"/>
</dbReference>
<dbReference type="SUPFAM" id="SSF144232">
    <property type="entry name" value="HIT/MYND zinc finger-like"/>
    <property type="match status" value="1"/>
</dbReference>
<dbReference type="PROSITE" id="PS51083">
    <property type="entry name" value="ZF_HIT"/>
    <property type="match status" value="1"/>
</dbReference>
<gene>
    <name type="primary">BCD1</name>
    <name type="ordered locus">YHR040W</name>
</gene>
<comment type="function">
    <text evidence="3">Required for box C/D snoRNAs accumulation involved in snoRNA processing, snoRNA transport to the nucleolus and ribosome biogenesis.</text>
</comment>
<comment type="subcellular location">
    <subcellularLocation>
        <location evidence="4 6">Nucleus</location>
    </subcellularLocation>
</comment>
<comment type="miscellaneous">
    <text evidence="5">Present with 2800 molecules/cell in log phase SD medium.</text>
</comment>
<comment type="similarity">
    <text evidence="7">Belongs to the BCD1 family.</text>
</comment>
<protein>
    <recommendedName>
        <fullName>Box C/D snoRNA protein 1</fullName>
    </recommendedName>
</protein>
<keyword id="KW-0002">3D-structure</keyword>
<keyword id="KW-0479">Metal-binding</keyword>
<keyword id="KW-0539">Nucleus</keyword>
<keyword id="KW-0597">Phosphoprotein</keyword>
<keyword id="KW-1185">Reference proteome</keyword>
<keyword id="KW-0690">Ribosome biogenesis</keyword>
<keyword id="KW-0862">Zinc</keyword>
<keyword id="KW-0863">Zinc-finger</keyword>
<sequence>MAVLCGVCGIKEFKYKCPRCLVQTCSLECSKKHKTRDNCSGQTHDPKEYISSEALKQADDDKHERNAYVQRDYNYLTQLKRMVHVQKMDARMKNKRVLGPVGGHNSNFKKRRYDIDEDDRDSTECQRIIRRGVNCLMLPKGMQRSSQNRSKWDKTMDLFVWSVEWILCPMQEKGEKKELFKHVSHRIKETDFLVQGMGKNVFQKCCEFYRLAGTSSCIEGEDGSETKEERTQILQKSGLKFYTKTFPYNTTHIMDSKKLVELAIHEKCIGELLKNTTVIEFPTIFVAMTEADLPEGYEVLHQEPRPLEHTSTLNKFIDNAREEEDAEEDSQPTEEPVQKETQDASDSDSDSDDDYNPGLSMDFLTA</sequence>
<reference key="1">
    <citation type="journal article" date="1994" name="Science">
        <title>Complete nucleotide sequence of Saccharomyces cerevisiae chromosome VIII.</title>
        <authorList>
            <person name="Johnston M."/>
            <person name="Andrews S."/>
            <person name="Brinkman R."/>
            <person name="Cooper J."/>
            <person name="Ding H."/>
            <person name="Dover J."/>
            <person name="Du Z."/>
            <person name="Favello A."/>
            <person name="Fulton L."/>
            <person name="Gattung S."/>
            <person name="Geisel C."/>
            <person name="Kirsten J."/>
            <person name="Kucaba T."/>
            <person name="Hillier L.W."/>
            <person name="Jier M."/>
            <person name="Johnston L."/>
            <person name="Langston Y."/>
            <person name="Latreille P."/>
            <person name="Louis E.J."/>
            <person name="Macri C."/>
            <person name="Mardis E."/>
            <person name="Menezes S."/>
            <person name="Mouser L."/>
            <person name="Nhan M."/>
            <person name="Rifkin L."/>
            <person name="Riles L."/>
            <person name="St Peter H."/>
            <person name="Trevaskis E."/>
            <person name="Vaughan K."/>
            <person name="Vignati D."/>
            <person name="Wilcox L."/>
            <person name="Wohldman P."/>
            <person name="Waterston R."/>
            <person name="Wilson R."/>
            <person name="Vaudin M."/>
        </authorList>
    </citation>
    <scope>NUCLEOTIDE SEQUENCE [LARGE SCALE GENOMIC DNA]</scope>
    <source>
        <strain>ATCC 204508 / S288c</strain>
    </source>
</reference>
<reference key="2">
    <citation type="journal article" date="2014" name="G3 (Bethesda)">
        <title>The reference genome sequence of Saccharomyces cerevisiae: Then and now.</title>
        <authorList>
            <person name="Engel S.R."/>
            <person name="Dietrich F.S."/>
            <person name="Fisk D.G."/>
            <person name="Binkley G."/>
            <person name="Balakrishnan R."/>
            <person name="Costanzo M.C."/>
            <person name="Dwight S.S."/>
            <person name="Hitz B.C."/>
            <person name="Karra K."/>
            <person name="Nash R.S."/>
            <person name="Weng S."/>
            <person name="Wong E.D."/>
            <person name="Lloyd P."/>
            <person name="Skrzypek M.S."/>
            <person name="Miyasato S.R."/>
            <person name="Simison M."/>
            <person name="Cherry J.M."/>
        </authorList>
    </citation>
    <scope>GENOME REANNOTATION</scope>
    <source>
        <strain>ATCC 204508 / S288c</strain>
    </source>
</reference>
<reference key="3">
    <citation type="journal article" date="2003" name="Cell">
        <title>A panoramic view of yeast noncoding RNA processing.</title>
        <authorList>
            <person name="Peng W.-T."/>
            <person name="Robinson M.D."/>
            <person name="Mnaimneh S."/>
            <person name="Krogan N.J."/>
            <person name="Cagney G."/>
            <person name="Morris Q.D."/>
            <person name="Davierwala A.P."/>
            <person name="Grigull J."/>
            <person name="Yang X."/>
            <person name="Zhang W."/>
            <person name="Mitsakakis N."/>
            <person name="Ryan O.W."/>
            <person name="Datta N."/>
            <person name="Jojic V."/>
            <person name="Pal C."/>
            <person name="Canadien V."/>
            <person name="Richards D.P."/>
            <person name="Beattie B."/>
            <person name="Wu L.F."/>
            <person name="Altschuler S.J."/>
            <person name="Roweis S."/>
            <person name="Frey B.J."/>
            <person name="Emili A."/>
            <person name="Greenblatt J.F."/>
            <person name="Hughes T.R."/>
        </authorList>
    </citation>
    <scope>FUNCTION</scope>
</reference>
<reference key="4">
    <citation type="journal article" date="2003" name="Mol. Cell">
        <title>Assigning function to yeast proteins by integration of technologies.</title>
        <authorList>
            <person name="Hazbun T.R."/>
            <person name="Malmstroem L."/>
            <person name="Anderson S."/>
            <person name="Graczyk B.J."/>
            <person name="Fox B."/>
            <person name="Riffle M."/>
            <person name="Sundin B.A."/>
            <person name="Aranda J.D."/>
            <person name="McDonald W.H."/>
            <person name="Chiu C.-H."/>
            <person name="Snydsman B.E."/>
            <person name="Bradley P."/>
            <person name="Muller E.G.D."/>
            <person name="Fields S."/>
            <person name="Baker D."/>
            <person name="Yates J.R. III"/>
            <person name="Davis T.N."/>
        </authorList>
    </citation>
    <scope>SUBCELLULAR LOCATION [LARGE SCALE ANALYSIS]</scope>
</reference>
<reference key="5">
    <citation type="journal article" date="2003" name="Nature">
        <title>Global analysis of protein localization in budding yeast.</title>
        <authorList>
            <person name="Huh W.-K."/>
            <person name="Falvo J.V."/>
            <person name="Gerke L.C."/>
            <person name="Carroll A.S."/>
            <person name="Howson R.W."/>
            <person name="Weissman J.S."/>
            <person name="O'Shea E.K."/>
        </authorList>
    </citation>
    <scope>SUBCELLULAR LOCATION [LARGE SCALE ANALYSIS]</scope>
</reference>
<reference key="6">
    <citation type="journal article" date="2003" name="Nature">
        <title>Global analysis of protein expression in yeast.</title>
        <authorList>
            <person name="Ghaemmaghami S."/>
            <person name="Huh W.-K."/>
            <person name="Bower K."/>
            <person name="Howson R.W."/>
            <person name="Belle A."/>
            <person name="Dephoure N."/>
            <person name="O'Shea E.K."/>
            <person name="Weissman J.S."/>
        </authorList>
    </citation>
    <scope>LEVEL OF PROTEIN EXPRESSION [LARGE SCALE ANALYSIS]</scope>
</reference>
<reference key="7">
    <citation type="journal article" date="2007" name="J. Proteome Res.">
        <title>Large-scale phosphorylation analysis of alpha-factor-arrested Saccharomyces cerevisiae.</title>
        <authorList>
            <person name="Li X."/>
            <person name="Gerber S.A."/>
            <person name="Rudner A.D."/>
            <person name="Beausoleil S.A."/>
            <person name="Haas W."/>
            <person name="Villen J."/>
            <person name="Elias J.E."/>
            <person name="Gygi S.P."/>
        </authorList>
    </citation>
    <scope>IDENTIFICATION BY MASS SPECTROMETRY [LARGE SCALE ANALYSIS]</scope>
    <source>
        <strain>ADR376</strain>
    </source>
</reference>
<reference key="8">
    <citation type="journal article" date="2008" name="Mol. Cell. Proteomics">
        <title>A multidimensional chromatography technology for in-depth phosphoproteome analysis.</title>
        <authorList>
            <person name="Albuquerque C.P."/>
            <person name="Smolka M.B."/>
            <person name="Payne S.H."/>
            <person name="Bafna V."/>
            <person name="Eng J."/>
            <person name="Zhou H."/>
        </authorList>
    </citation>
    <scope>PHOSPHORYLATION [LARGE SCALE ANALYSIS] AT SER-330</scope>
    <scope>IDENTIFICATION BY MASS SPECTROMETRY [LARGE SCALE ANALYSIS]</scope>
</reference>
<accession>P38772</accession>
<accession>D3DKY8</accession>